<evidence type="ECO:0000250" key="1"/>
<evidence type="ECO:0000255" key="2"/>
<evidence type="ECO:0000255" key="3">
    <source>
        <dbReference type="PROSITE-ProRule" id="PRU00159"/>
    </source>
</evidence>
<evidence type="ECO:0000256" key="4">
    <source>
        <dbReference type="SAM" id="MobiDB-lite"/>
    </source>
</evidence>
<evidence type="ECO:0000305" key="5"/>
<reference key="1">
    <citation type="journal article" date="1999" name="Nature">
        <title>Sequence and analysis of chromosome 2 of the plant Arabidopsis thaliana.</title>
        <authorList>
            <person name="Lin X."/>
            <person name="Kaul S."/>
            <person name="Rounsley S.D."/>
            <person name="Shea T.P."/>
            <person name="Benito M.-I."/>
            <person name="Town C.D."/>
            <person name="Fujii C.Y."/>
            <person name="Mason T.M."/>
            <person name="Bowman C.L."/>
            <person name="Barnstead M.E."/>
            <person name="Feldblyum T.V."/>
            <person name="Buell C.R."/>
            <person name="Ketchum K.A."/>
            <person name="Lee J.J."/>
            <person name="Ronning C.M."/>
            <person name="Koo H.L."/>
            <person name="Moffat K.S."/>
            <person name="Cronin L.A."/>
            <person name="Shen M."/>
            <person name="Pai G."/>
            <person name="Van Aken S."/>
            <person name="Umayam L."/>
            <person name="Tallon L.J."/>
            <person name="Gill J.E."/>
            <person name="Adams M.D."/>
            <person name="Carrera A.J."/>
            <person name="Creasy T.H."/>
            <person name="Goodman H.M."/>
            <person name="Somerville C.R."/>
            <person name="Copenhaver G.P."/>
            <person name="Preuss D."/>
            <person name="Nierman W.C."/>
            <person name="White O."/>
            <person name="Eisen J.A."/>
            <person name="Salzberg S.L."/>
            <person name="Fraser C.M."/>
            <person name="Venter J.C."/>
        </authorList>
    </citation>
    <scope>NUCLEOTIDE SEQUENCE [LARGE SCALE GENOMIC DNA]</scope>
    <source>
        <strain>cv. Columbia</strain>
    </source>
</reference>
<reference key="2">
    <citation type="journal article" date="2017" name="Plant J.">
        <title>Araport11: a complete reannotation of the Arabidopsis thaliana reference genome.</title>
        <authorList>
            <person name="Cheng C.Y."/>
            <person name="Krishnakumar V."/>
            <person name="Chan A.P."/>
            <person name="Thibaud-Nissen F."/>
            <person name="Schobel S."/>
            <person name="Town C.D."/>
        </authorList>
    </citation>
    <scope>GENOME REANNOTATION</scope>
    <source>
        <strain>cv. Columbia</strain>
    </source>
</reference>
<reference key="3">
    <citation type="journal article" date="2002" name="Crit. Rev. Plant Sci.">
        <title>Lectin receptor kinases in plants.</title>
        <authorList>
            <person name="Barre A."/>
            <person name="Herve C."/>
            <person name="Lescure B."/>
            <person name="Rouge P."/>
        </authorList>
    </citation>
    <scope>GENE FAMILY</scope>
</reference>
<reference key="4">
    <citation type="journal article" date="2009" name="J. Exp. Bot.">
        <title>Arabidopsis L-type lectin receptor kinases: phylogeny, classification, and expression profiles.</title>
        <authorList>
            <person name="Bouwmeester K."/>
            <person name="Govers F."/>
        </authorList>
    </citation>
    <scope>GENE FAMILY</scope>
    <scope>NOMENCLATURE</scope>
</reference>
<name>LRK31_ARATH</name>
<gene>
    <name type="primary">LECRK31</name>
    <name type="ordered locus">At2g29220</name>
    <name type="ORF">F16P2.40</name>
</gene>
<feature type="signal peptide" evidence="2">
    <location>
        <begin position="1"/>
        <end position="23"/>
    </location>
</feature>
<feature type="chain" id="PRO_0000403083" description="Probable inactive L-type lectin-domain containing receptor kinase III.1">
    <location>
        <begin position="24"/>
        <end position="627"/>
    </location>
</feature>
<feature type="topological domain" description="Extracellular" evidence="2">
    <location>
        <begin position="24"/>
        <end position="303"/>
    </location>
</feature>
<feature type="transmembrane region" description="Helical" evidence="2">
    <location>
        <begin position="304"/>
        <end position="324"/>
    </location>
</feature>
<feature type="topological domain" description="Cytoplasmic" evidence="2">
    <location>
        <begin position="325"/>
        <end position="627"/>
    </location>
</feature>
<feature type="domain" description="Protein kinase" evidence="3">
    <location>
        <begin position="353"/>
        <end position="623"/>
    </location>
</feature>
<feature type="region of interest" description="Legume-lectin like">
    <location>
        <begin position="26"/>
        <end position="262"/>
    </location>
</feature>
<feature type="region of interest" description="Disordered" evidence="4">
    <location>
        <begin position="272"/>
        <end position="297"/>
    </location>
</feature>
<feature type="compositionally biased region" description="Pro residues" evidence="4">
    <location>
        <begin position="278"/>
        <end position="292"/>
    </location>
</feature>
<feature type="binding site" evidence="3">
    <location>
        <begin position="359"/>
        <end position="367"/>
    </location>
    <ligand>
        <name>ATP</name>
        <dbReference type="ChEBI" id="CHEBI:30616"/>
    </ligand>
</feature>
<feature type="binding site" evidence="3">
    <location>
        <position position="381"/>
    </location>
    <ligand>
        <name>ATP</name>
        <dbReference type="ChEBI" id="CHEBI:30616"/>
    </ligand>
</feature>
<feature type="glycosylation site" description="N-linked (GlcNAc...) asparagine" evidence="2">
    <location>
        <position position="57"/>
    </location>
</feature>
<feature type="glycosylation site" description="N-linked (GlcNAc...) asparagine" evidence="2">
    <location>
        <position position="78"/>
    </location>
</feature>
<feature type="glycosylation site" description="N-linked (GlcNAc...) asparagine" evidence="2">
    <location>
        <position position="127"/>
    </location>
</feature>
<feature type="glycosylation site" description="N-linked (GlcNAc...) asparagine" evidence="2">
    <location>
        <position position="184"/>
    </location>
</feature>
<feature type="glycosylation site" description="N-linked (GlcNAc...) asparagine" evidence="2">
    <location>
        <position position="202"/>
    </location>
</feature>
<feature type="glycosylation site" description="N-linked (GlcNAc...) asparagine" evidence="2">
    <location>
        <position position="209"/>
    </location>
</feature>
<feature type="glycosylation site" description="N-linked (GlcNAc...) asparagine" evidence="2">
    <location>
        <position position="230"/>
    </location>
</feature>
<feature type="glycosylation site" description="N-linked (GlcNAc...) asparagine" evidence="2">
    <location>
        <position position="300"/>
    </location>
</feature>
<protein>
    <recommendedName>
        <fullName>Probable inactive L-type lectin-domain containing receptor kinase III.1</fullName>
        <shortName>LecRK-III.1</shortName>
    </recommendedName>
</protein>
<keyword id="KW-0067">ATP-binding</keyword>
<keyword id="KW-1003">Cell membrane</keyword>
<keyword id="KW-0325">Glycoprotein</keyword>
<keyword id="KW-0430">Lectin</keyword>
<keyword id="KW-0472">Membrane</keyword>
<keyword id="KW-0547">Nucleotide-binding</keyword>
<keyword id="KW-0675">Receptor</keyword>
<keyword id="KW-1185">Reference proteome</keyword>
<keyword id="KW-0732">Signal</keyword>
<keyword id="KW-0812">Transmembrane</keyword>
<keyword id="KW-1133">Transmembrane helix</keyword>
<sequence length="627" mass="68789">MITFKSIALTIIFLSYFVSCVSSQRETKFLNHGFLGANLLNFGSSKVYPSGLLELTNTSMRQIGQAFHGFPIPLSNPNSTNSVSFSTSFIFAITQGTGAPGHGLAFVISPSMDFSGAFPSNYLGLFNTSNNGNSLNRILAIEFDTVQAVELNDIDDNHVGIDLNGVISIASAPAAYFDDREAKNISLRLASGKPVRVWIEYNATETMLNVTLAPLDRPKPSIPLLSRKMNLSGIFSQEHHVGFSASTGTVASSHFVLGWSFNIEGKESDFDITKLPSLPDPPPTLSPSPSPPVSTEKKSNNTMLIIIVAASATVALMILIFSGFWFLRRDKIFFIGGARKFSYQTISNATGGFDNSKLLGERNSGSFYKGQLAPTEIIAVKKITCTTRQQKTTLIAEIDAISKIKQRNLVNLHGYCSKGKDIYLVYEYVPNGSLDRFLFNNDRPVLTWSDRFCIIKGIAAALQHLHGEGQKPLIHGNVKASNVLLDEELNARLGDYGQGSRHSTTGHVAPELVNTGKVTRDTDVFAFGVLMMEIVCGRKAIEPTKAPEEISLVNWVLQGFKKGDLLMSCDTRINRENLVAREVLLVLKTGLLCANRSPESRPMMKNVFRYLEGTEALPHDDYLFYGV</sequence>
<accession>Q9ZW09</accession>
<dbReference type="EMBL" id="AC004561">
    <property type="protein sequence ID" value="AAC95213.1"/>
    <property type="molecule type" value="Genomic_DNA"/>
</dbReference>
<dbReference type="EMBL" id="CP002685">
    <property type="protein sequence ID" value="AEC08224.1"/>
    <property type="molecule type" value="Genomic_DNA"/>
</dbReference>
<dbReference type="PIR" id="H84693">
    <property type="entry name" value="H84693"/>
</dbReference>
<dbReference type="RefSeq" id="NP_180485.1">
    <property type="nucleotide sequence ID" value="NM_128478.2"/>
</dbReference>
<dbReference type="SMR" id="Q9ZW09"/>
<dbReference type="STRING" id="3702.Q9ZW09"/>
<dbReference type="GlyCosmos" id="Q9ZW09">
    <property type="glycosylation" value="8 sites, No reported glycans"/>
</dbReference>
<dbReference type="GlyGen" id="Q9ZW09">
    <property type="glycosylation" value="8 sites"/>
</dbReference>
<dbReference type="PaxDb" id="3702-AT2G29220.1"/>
<dbReference type="ProteomicsDB" id="238563"/>
<dbReference type="EnsemblPlants" id="AT2G29220.1">
    <property type="protein sequence ID" value="AT2G29220.1"/>
    <property type="gene ID" value="AT2G29220"/>
</dbReference>
<dbReference type="GeneID" id="817471"/>
<dbReference type="Gramene" id="AT2G29220.1">
    <property type="protein sequence ID" value="AT2G29220.1"/>
    <property type="gene ID" value="AT2G29220"/>
</dbReference>
<dbReference type="KEGG" id="ath:AT2G29220"/>
<dbReference type="Araport" id="AT2G29220"/>
<dbReference type="TAIR" id="AT2G29220">
    <property type="gene designation" value="LECRK-III.1"/>
</dbReference>
<dbReference type="eggNOG" id="ENOG502QSJ4">
    <property type="taxonomic scope" value="Eukaryota"/>
</dbReference>
<dbReference type="HOGENOM" id="CLU_000288_62_3_1"/>
<dbReference type="InParanoid" id="Q9ZW09"/>
<dbReference type="OMA" id="KKITCTT"/>
<dbReference type="PhylomeDB" id="Q9ZW09"/>
<dbReference type="PRO" id="PR:Q9ZW09"/>
<dbReference type="Proteomes" id="UP000006548">
    <property type="component" value="Chromosome 2"/>
</dbReference>
<dbReference type="ExpressionAtlas" id="Q9ZW09">
    <property type="expression patterns" value="baseline and differential"/>
</dbReference>
<dbReference type="GO" id="GO:0005886">
    <property type="term" value="C:plasma membrane"/>
    <property type="evidence" value="ECO:0000250"/>
    <property type="project" value="UniProtKB"/>
</dbReference>
<dbReference type="GO" id="GO:0005524">
    <property type="term" value="F:ATP binding"/>
    <property type="evidence" value="ECO:0007669"/>
    <property type="project" value="UniProtKB-KW"/>
</dbReference>
<dbReference type="GO" id="GO:0030246">
    <property type="term" value="F:carbohydrate binding"/>
    <property type="evidence" value="ECO:0007669"/>
    <property type="project" value="UniProtKB-KW"/>
</dbReference>
<dbReference type="GO" id="GO:0004672">
    <property type="term" value="F:protein kinase activity"/>
    <property type="evidence" value="ECO:0007669"/>
    <property type="project" value="InterPro"/>
</dbReference>
<dbReference type="GO" id="GO:0098542">
    <property type="term" value="P:defense response to other organism"/>
    <property type="evidence" value="ECO:0007669"/>
    <property type="project" value="UniProtKB-ARBA"/>
</dbReference>
<dbReference type="CDD" id="cd06899">
    <property type="entry name" value="lectin_legume_LecRK_Arcelin_ConA"/>
    <property type="match status" value="1"/>
</dbReference>
<dbReference type="FunFam" id="2.60.120.200:FF:000096">
    <property type="entry name" value="L-type lectin-domain containing receptor kinase V.9"/>
    <property type="match status" value="1"/>
</dbReference>
<dbReference type="FunFam" id="1.10.510.10:FF:000240">
    <property type="entry name" value="Lectin-domain containing receptor kinase A4.3"/>
    <property type="match status" value="1"/>
</dbReference>
<dbReference type="Gene3D" id="2.60.120.200">
    <property type="match status" value="1"/>
</dbReference>
<dbReference type="Gene3D" id="3.30.200.20">
    <property type="entry name" value="Phosphorylase Kinase, domain 1"/>
    <property type="match status" value="1"/>
</dbReference>
<dbReference type="Gene3D" id="1.10.510.10">
    <property type="entry name" value="Transferase(Phosphotransferase) domain 1"/>
    <property type="match status" value="1"/>
</dbReference>
<dbReference type="InterPro" id="IPR013320">
    <property type="entry name" value="ConA-like_dom_sf"/>
</dbReference>
<dbReference type="InterPro" id="IPR011009">
    <property type="entry name" value="Kinase-like_dom_sf"/>
</dbReference>
<dbReference type="InterPro" id="IPR050528">
    <property type="entry name" value="L-type_Lectin-RKs"/>
</dbReference>
<dbReference type="InterPro" id="IPR001220">
    <property type="entry name" value="Legume_lectin_dom"/>
</dbReference>
<dbReference type="InterPro" id="IPR000719">
    <property type="entry name" value="Prot_kinase_dom"/>
</dbReference>
<dbReference type="InterPro" id="IPR001245">
    <property type="entry name" value="Ser-Thr/Tyr_kinase_cat_dom"/>
</dbReference>
<dbReference type="PANTHER" id="PTHR27007">
    <property type="match status" value="1"/>
</dbReference>
<dbReference type="Pfam" id="PF00139">
    <property type="entry name" value="Lectin_legB"/>
    <property type="match status" value="1"/>
</dbReference>
<dbReference type="Pfam" id="PF07714">
    <property type="entry name" value="PK_Tyr_Ser-Thr"/>
    <property type="match status" value="1"/>
</dbReference>
<dbReference type="SUPFAM" id="SSF49899">
    <property type="entry name" value="Concanavalin A-like lectins/glucanases"/>
    <property type="match status" value="1"/>
</dbReference>
<dbReference type="SUPFAM" id="SSF56112">
    <property type="entry name" value="Protein kinase-like (PK-like)"/>
    <property type="match status" value="1"/>
</dbReference>
<dbReference type="PROSITE" id="PS50011">
    <property type="entry name" value="PROTEIN_KINASE_DOM"/>
    <property type="match status" value="1"/>
</dbReference>
<organism>
    <name type="scientific">Arabidopsis thaliana</name>
    <name type="common">Mouse-ear cress</name>
    <dbReference type="NCBI Taxonomy" id="3702"/>
    <lineage>
        <taxon>Eukaryota</taxon>
        <taxon>Viridiplantae</taxon>
        <taxon>Streptophyta</taxon>
        <taxon>Embryophyta</taxon>
        <taxon>Tracheophyta</taxon>
        <taxon>Spermatophyta</taxon>
        <taxon>Magnoliopsida</taxon>
        <taxon>eudicotyledons</taxon>
        <taxon>Gunneridae</taxon>
        <taxon>Pentapetalae</taxon>
        <taxon>rosids</taxon>
        <taxon>malvids</taxon>
        <taxon>Brassicales</taxon>
        <taxon>Brassicaceae</taxon>
        <taxon>Camelineae</taxon>
        <taxon>Arabidopsis</taxon>
    </lineage>
</organism>
<comment type="subcellular location">
    <subcellularLocation>
        <location evidence="1">Cell membrane</location>
        <topology evidence="1">Single-pass type I membrane protein</topology>
    </subcellularLocation>
</comment>
<comment type="domain">
    <text>The protein kinase domain is predicted to be catalytically inactive.</text>
</comment>
<comment type="similarity">
    <text evidence="5">In the C-terminal section; belongs to the protein kinase superfamily. Ser/Thr protein kinase family.</text>
</comment>
<comment type="similarity">
    <text evidence="5">In the N-terminal section; belongs to the leguminous lectin family.</text>
</comment>
<proteinExistence type="inferred from homology"/>